<proteinExistence type="inferred from homology"/>
<comment type="function">
    <text>This protein is one of many from the eggshell of the silk moth.</text>
</comment>
<comment type="similarity">
    <text evidence="2">Belongs to the chorion protein family.</text>
</comment>
<reference key="1">
    <citation type="journal article" date="1991" name="Genetics">
        <title>Sequence identity in an early chorion multigene family is the result of localized gene conversion.</title>
        <authorList>
            <person name="Hibner B.L."/>
            <person name="Burke W.D."/>
            <person name="Eickbush T.H."/>
        </authorList>
    </citation>
    <scope>NUCLEOTIDE SEQUENCE [GENOMIC DNA]</scope>
    <source>
        <strain>703</strain>
    </source>
</reference>
<dbReference type="EMBL" id="X58446">
    <property type="protein sequence ID" value="CAA41352.1"/>
    <property type="molecule type" value="Genomic_DNA"/>
</dbReference>
<dbReference type="PIR" id="S24292">
    <property type="entry name" value="S24292"/>
</dbReference>
<dbReference type="RefSeq" id="NP_001112378.1">
    <property type="nucleotide sequence ID" value="NM_001118906.1"/>
</dbReference>
<dbReference type="EnsemblMetazoa" id="NM_001118906.1">
    <property type="protein sequence ID" value="NP_001112378.1"/>
    <property type="gene ID" value="GeneID_100141509"/>
</dbReference>
<dbReference type="GeneID" id="100141509"/>
<dbReference type="KEGG" id="bmor:100141509"/>
<dbReference type="CTD" id="100141509"/>
<dbReference type="InParanoid" id="Q17213"/>
<dbReference type="OrthoDB" id="660270at7088"/>
<dbReference type="Proteomes" id="UP000005204">
    <property type="component" value="Unassembled WGS sequence"/>
</dbReference>
<dbReference type="GO" id="GO:0042600">
    <property type="term" value="C:egg chorion"/>
    <property type="evidence" value="ECO:0007669"/>
    <property type="project" value="InterPro"/>
</dbReference>
<dbReference type="GO" id="GO:0005213">
    <property type="term" value="F:structural constituent of egg chorion"/>
    <property type="evidence" value="ECO:0007669"/>
    <property type="project" value="InterPro"/>
</dbReference>
<dbReference type="GO" id="GO:0007304">
    <property type="term" value="P:chorion-containing eggshell formation"/>
    <property type="evidence" value="ECO:0007669"/>
    <property type="project" value="InterPro"/>
</dbReference>
<dbReference type="InterPro" id="IPR002635">
    <property type="entry name" value="Chorion"/>
</dbReference>
<dbReference type="Pfam" id="PF01723">
    <property type="entry name" value="Chorion_1"/>
    <property type="match status" value="2"/>
</dbReference>
<feature type="signal peptide" evidence="1">
    <location>
        <begin position="1"/>
        <end position="21"/>
    </location>
</feature>
<feature type="chain" id="PRO_0000005378" description="Chorion class CA protein ERA.3">
    <location>
        <begin position="22"/>
        <end position="119"/>
    </location>
</feature>
<feature type="region of interest" description="Left arm">
    <location>
        <begin position="22"/>
        <end position="55"/>
    </location>
</feature>
<feature type="region of interest" description="Central domain">
    <location>
        <begin position="56"/>
        <end position="103"/>
    </location>
</feature>
<feature type="region of interest" description="Right arm">
    <location>
        <begin position="104"/>
        <end position="119"/>
    </location>
</feature>
<evidence type="ECO:0000255" key="1"/>
<evidence type="ECO:0000305" key="2"/>
<accession>Q17213</accession>
<sequence length="119" mass="11338">MSYFVVFAICIQACLFHNVYSQCLGRVGPGGPPLGPYGGPLGGPGYGPVGYGGCGGYGGSGIGNVAVAGELPVVGSSAVMGQVPVIGAVEFAGPACAVGSVSISGACGPTCGCGGLPYY</sequence>
<name>CHCA3_BOMMO</name>
<gene>
    <name type="primary">ERA.3</name>
</gene>
<keyword id="KW-1185">Reference proteome</keyword>
<keyword id="KW-0677">Repeat</keyword>
<keyword id="KW-0732">Signal</keyword>
<organism>
    <name type="scientific">Bombyx mori</name>
    <name type="common">Silk moth</name>
    <dbReference type="NCBI Taxonomy" id="7091"/>
    <lineage>
        <taxon>Eukaryota</taxon>
        <taxon>Metazoa</taxon>
        <taxon>Ecdysozoa</taxon>
        <taxon>Arthropoda</taxon>
        <taxon>Hexapoda</taxon>
        <taxon>Insecta</taxon>
        <taxon>Pterygota</taxon>
        <taxon>Neoptera</taxon>
        <taxon>Endopterygota</taxon>
        <taxon>Lepidoptera</taxon>
        <taxon>Glossata</taxon>
        <taxon>Ditrysia</taxon>
        <taxon>Bombycoidea</taxon>
        <taxon>Bombycidae</taxon>
        <taxon>Bombycinae</taxon>
        <taxon>Bombyx</taxon>
    </lineage>
</organism>
<protein>
    <recommendedName>
        <fullName>Chorion class CA protein ERA.3</fullName>
    </recommendedName>
</protein>